<dbReference type="EC" id="2.1.1.107" evidence="2 3 6 7"/>
<dbReference type="EC" id="1.3.1.76" evidence="2 5 7"/>
<dbReference type="EC" id="4.99.1.4" evidence="2 5 7"/>
<dbReference type="EMBL" id="X14202">
    <property type="protein sequence ID" value="CAA32419.1"/>
    <property type="molecule type" value="Genomic_DNA"/>
</dbReference>
<dbReference type="EMBL" id="U18997">
    <property type="protein sequence ID" value="AAA58165.1"/>
    <property type="molecule type" value="Genomic_DNA"/>
</dbReference>
<dbReference type="EMBL" id="U00096">
    <property type="protein sequence ID" value="AAC76393.1"/>
    <property type="molecule type" value="Genomic_DNA"/>
</dbReference>
<dbReference type="EMBL" id="AP009048">
    <property type="protein sequence ID" value="BAE77922.1"/>
    <property type="molecule type" value="Genomic_DNA"/>
</dbReference>
<dbReference type="PIR" id="C65131">
    <property type="entry name" value="C65131"/>
</dbReference>
<dbReference type="RefSeq" id="NP_417827.1">
    <property type="nucleotide sequence ID" value="NC_000913.3"/>
</dbReference>
<dbReference type="RefSeq" id="WP_000349855.1">
    <property type="nucleotide sequence ID" value="NZ_STEB01000004.1"/>
</dbReference>
<dbReference type="SMR" id="P0AEA8"/>
<dbReference type="BioGRID" id="4262478">
    <property type="interactions" value="8"/>
</dbReference>
<dbReference type="FunCoup" id="P0AEA8">
    <property type="interactions" value="341"/>
</dbReference>
<dbReference type="IntAct" id="P0AEA8">
    <property type="interactions" value="1"/>
</dbReference>
<dbReference type="STRING" id="511145.b3368"/>
<dbReference type="jPOST" id="P0AEA8"/>
<dbReference type="PaxDb" id="511145-b3368"/>
<dbReference type="EnsemblBacteria" id="AAC76393">
    <property type="protein sequence ID" value="AAC76393"/>
    <property type="gene ID" value="b3368"/>
</dbReference>
<dbReference type="GeneID" id="75173526"/>
<dbReference type="GeneID" id="947880"/>
<dbReference type="KEGG" id="ecj:JW3331"/>
<dbReference type="KEGG" id="eco:b3368"/>
<dbReference type="KEGG" id="ecoc:C3026_18290"/>
<dbReference type="PATRIC" id="fig|1411691.4.peg.3361"/>
<dbReference type="EchoBASE" id="EB0185"/>
<dbReference type="eggNOG" id="COG0007">
    <property type="taxonomic scope" value="Bacteria"/>
</dbReference>
<dbReference type="eggNOG" id="COG1648">
    <property type="taxonomic scope" value="Bacteria"/>
</dbReference>
<dbReference type="HOGENOM" id="CLU_011276_2_0_6"/>
<dbReference type="InParanoid" id="P0AEA8"/>
<dbReference type="OMA" id="IPYGRFM"/>
<dbReference type="OrthoDB" id="9815856at2"/>
<dbReference type="PhylomeDB" id="P0AEA8"/>
<dbReference type="BioCyc" id="EcoCyc:SIROHEMESYN-MONOMER"/>
<dbReference type="BioCyc" id="MetaCyc:SIROHEMESYN-MONOMER"/>
<dbReference type="UniPathway" id="UPA00148">
    <property type="reaction ID" value="UER00211"/>
</dbReference>
<dbReference type="UniPathway" id="UPA00148">
    <property type="reaction ID" value="UER00222"/>
</dbReference>
<dbReference type="UniPathway" id="UPA00262">
    <property type="reaction ID" value="UER00211"/>
</dbReference>
<dbReference type="UniPathway" id="UPA00262">
    <property type="reaction ID" value="UER00222"/>
</dbReference>
<dbReference type="UniPathway" id="UPA00262">
    <property type="reaction ID" value="UER00376"/>
</dbReference>
<dbReference type="PRO" id="PR:P0AEA8"/>
<dbReference type="Proteomes" id="UP000000625">
    <property type="component" value="Chromosome"/>
</dbReference>
<dbReference type="GO" id="GO:0051287">
    <property type="term" value="F:NAD binding"/>
    <property type="evidence" value="ECO:0007669"/>
    <property type="project" value="InterPro"/>
</dbReference>
<dbReference type="GO" id="GO:0043115">
    <property type="term" value="F:precorrin-2 dehydrogenase activity"/>
    <property type="evidence" value="ECO:0000269"/>
    <property type="project" value="EcoCyc"/>
</dbReference>
<dbReference type="GO" id="GO:0042803">
    <property type="term" value="F:protein homodimerization activity"/>
    <property type="evidence" value="ECO:0000353"/>
    <property type="project" value="EcoCyc"/>
</dbReference>
<dbReference type="GO" id="GO:0051266">
    <property type="term" value="F:sirohydrochlorin ferrochelatase activity"/>
    <property type="evidence" value="ECO:0000269"/>
    <property type="project" value="EcoCyc"/>
</dbReference>
<dbReference type="GO" id="GO:0004851">
    <property type="term" value="F:uroporphyrin-III C-methyltransferase activity"/>
    <property type="evidence" value="ECO:0000314"/>
    <property type="project" value="EcoCyc"/>
</dbReference>
<dbReference type="GO" id="GO:0009236">
    <property type="term" value="P:cobalamin biosynthetic process"/>
    <property type="evidence" value="ECO:0007669"/>
    <property type="project" value="UniProtKB-UniRule"/>
</dbReference>
<dbReference type="GO" id="GO:0032259">
    <property type="term" value="P:methylation"/>
    <property type="evidence" value="ECO:0007669"/>
    <property type="project" value="UniProtKB-KW"/>
</dbReference>
<dbReference type="GO" id="GO:0006970">
    <property type="term" value="P:response to osmotic stress"/>
    <property type="evidence" value="ECO:0000315"/>
    <property type="project" value="EcoCyc"/>
</dbReference>
<dbReference type="GO" id="GO:0019354">
    <property type="term" value="P:siroheme biosynthetic process"/>
    <property type="evidence" value="ECO:0000269"/>
    <property type="project" value="EcoCyc"/>
</dbReference>
<dbReference type="CDD" id="cd11642">
    <property type="entry name" value="SUMT"/>
    <property type="match status" value="1"/>
</dbReference>
<dbReference type="FunFam" id="1.10.8.210:FF:000001">
    <property type="entry name" value="Siroheme synthase"/>
    <property type="match status" value="1"/>
</dbReference>
<dbReference type="FunFam" id="3.30.160.110:FF:000001">
    <property type="entry name" value="Siroheme synthase"/>
    <property type="match status" value="1"/>
</dbReference>
<dbReference type="FunFam" id="3.30.950.10:FF:000001">
    <property type="entry name" value="Siroheme synthase"/>
    <property type="match status" value="1"/>
</dbReference>
<dbReference type="FunFam" id="3.40.1010.10:FF:000001">
    <property type="entry name" value="Siroheme synthase"/>
    <property type="match status" value="1"/>
</dbReference>
<dbReference type="FunFam" id="3.40.50.720:FF:000092">
    <property type="entry name" value="Siroheme synthase"/>
    <property type="match status" value="1"/>
</dbReference>
<dbReference type="Gene3D" id="3.40.1010.10">
    <property type="entry name" value="Cobalt-precorrin-4 Transmethylase, Domain 1"/>
    <property type="match status" value="1"/>
</dbReference>
<dbReference type="Gene3D" id="3.30.950.10">
    <property type="entry name" value="Methyltransferase, Cobalt-precorrin-4 Transmethylase, Domain 2"/>
    <property type="match status" value="1"/>
</dbReference>
<dbReference type="Gene3D" id="3.40.50.720">
    <property type="entry name" value="NAD(P)-binding Rossmann-like Domain"/>
    <property type="match status" value="1"/>
</dbReference>
<dbReference type="Gene3D" id="1.10.8.210">
    <property type="entry name" value="Sirohaem synthase, dimerisation domain"/>
    <property type="match status" value="1"/>
</dbReference>
<dbReference type="Gene3D" id="3.30.160.110">
    <property type="entry name" value="Siroheme synthase, domain 2"/>
    <property type="match status" value="1"/>
</dbReference>
<dbReference type="HAMAP" id="MF_01646">
    <property type="entry name" value="Siroheme_synth"/>
    <property type="match status" value="1"/>
</dbReference>
<dbReference type="InterPro" id="IPR000878">
    <property type="entry name" value="4pyrrol_Mease"/>
</dbReference>
<dbReference type="InterPro" id="IPR035996">
    <property type="entry name" value="4pyrrol_Methylase_sf"/>
</dbReference>
<dbReference type="InterPro" id="IPR014777">
    <property type="entry name" value="4pyrrole_Mease_sub1"/>
</dbReference>
<dbReference type="InterPro" id="IPR014776">
    <property type="entry name" value="4pyrrole_Mease_sub2"/>
</dbReference>
<dbReference type="InterPro" id="IPR006366">
    <property type="entry name" value="CobA/CysG_C"/>
</dbReference>
<dbReference type="InterPro" id="IPR036291">
    <property type="entry name" value="NAD(P)-bd_dom_sf"/>
</dbReference>
<dbReference type="InterPro" id="IPR050161">
    <property type="entry name" value="Siro_Cobalamin_biosynth"/>
</dbReference>
<dbReference type="InterPro" id="IPR037115">
    <property type="entry name" value="Sirohaem_synt_dimer_dom_sf"/>
</dbReference>
<dbReference type="InterPro" id="IPR012409">
    <property type="entry name" value="Sirohaem_synth"/>
</dbReference>
<dbReference type="InterPro" id="IPR028281">
    <property type="entry name" value="Sirohaem_synthase_central"/>
</dbReference>
<dbReference type="InterPro" id="IPR019478">
    <property type="entry name" value="Sirohaem_synthase_dimer_dom"/>
</dbReference>
<dbReference type="InterPro" id="IPR006367">
    <property type="entry name" value="Sirohaem_synthase_N"/>
</dbReference>
<dbReference type="InterPro" id="IPR003043">
    <property type="entry name" value="Uropor_MeTrfase_CS"/>
</dbReference>
<dbReference type="NCBIfam" id="TIGR01469">
    <property type="entry name" value="cobA_cysG_Cterm"/>
    <property type="match status" value="1"/>
</dbReference>
<dbReference type="NCBIfam" id="TIGR01470">
    <property type="entry name" value="cysG_Nterm"/>
    <property type="match status" value="1"/>
</dbReference>
<dbReference type="NCBIfam" id="NF004790">
    <property type="entry name" value="PRK06136.1"/>
    <property type="match status" value="1"/>
</dbReference>
<dbReference type="NCBIfam" id="NF007922">
    <property type="entry name" value="PRK10637.1"/>
    <property type="match status" value="1"/>
</dbReference>
<dbReference type="PANTHER" id="PTHR45790:SF1">
    <property type="entry name" value="SIROHEME SYNTHASE"/>
    <property type="match status" value="1"/>
</dbReference>
<dbReference type="PANTHER" id="PTHR45790">
    <property type="entry name" value="SIROHEME SYNTHASE-RELATED"/>
    <property type="match status" value="1"/>
</dbReference>
<dbReference type="Pfam" id="PF10414">
    <property type="entry name" value="CysG_dimeriser"/>
    <property type="match status" value="1"/>
</dbReference>
<dbReference type="Pfam" id="PF13241">
    <property type="entry name" value="NAD_binding_7"/>
    <property type="match status" value="1"/>
</dbReference>
<dbReference type="Pfam" id="PF14824">
    <property type="entry name" value="Sirohm_synth_M"/>
    <property type="match status" value="1"/>
</dbReference>
<dbReference type="Pfam" id="PF00590">
    <property type="entry name" value="TP_methylase"/>
    <property type="match status" value="1"/>
</dbReference>
<dbReference type="PIRSF" id="PIRSF036426">
    <property type="entry name" value="Sirohaem_synth"/>
    <property type="match status" value="1"/>
</dbReference>
<dbReference type="SUPFAM" id="SSF51735">
    <property type="entry name" value="NAD(P)-binding Rossmann-fold domains"/>
    <property type="match status" value="1"/>
</dbReference>
<dbReference type="SUPFAM" id="SSF75615">
    <property type="entry name" value="Siroheme synthase middle domains-like"/>
    <property type="match status" value="1"/>
</dbReference>
<dbReference type="SUPFAM" id="SSF53790">
    <property type="entry name" value="Tetrapyrrole methylase"/>
    <property type="match status" value="1"/>
</dbReference>
<dbReference type="PROSITE" id="PS00839">
    <property type="entry name" value="SUMT_1"/>
    <property type="match status" value="1"/>
</dbReference>
<dbReference type="PROSITE" id="PS00840">
    <property type="entry name" value="SUMT_2"/>
    <property type="match status" value="1"/>
</dbReference>
<sequence length="457" mass="49951">MDHLPIFCQLRDRDCLIVGGGDVAERKARLLLDAGARLTVNALAFIPQFTAWADAGMLTLVEGPFDESLLDTCWLAIAATDDDALNQRVSEAAEARRIFCNVVDAPKAASFIMPSIIDRSPLMVAVSSGGTSPVLARLLREKLESLLPLHLGQVAKYAGQLRGRVKQQFATMGERRRFWEKLFVNDRLAQSLANNDQKAITETTEQLINEPLDHRGEVVLVGAGPGDAGLLTLKGLQQIQQADVVVYDRLVSDDIMNLVRRDADRVFVGKRAGYHCVPQEEINQILLREAQKGKRVVRLKGGDPFIFGRGGEELETLCNAGIPFSVVPGITAASGCSAYSGIPLTHRDYAQSVRLITGHLKTGGELDWENLAAEKQTLVFYMGLNQAATIQQKLIEHGMPGEMPVAIVENGTAVTQRVIDGTLTQLGELAQQMNSPSLIIIGRVVGLRDKLNWFSNH</sequence>
<keyword id="KW-0169">Cobalamin biosynthesis</keyword>
<keyword id="KW-0903">Direct protein sequencing</keyword>
<keyword id="KW-0456">Lyase</keyword>
<keyword id="KW-0489">Methyltransferase</keyword>
<keyword id="KW-0511">Multifunctional enzyme</keyword>
<keyword id="KW-0520">NAD</keyword>
<keyword id="KW-0560">Oxidoreductase</keyword>
<keyword id="KW-0597">Phosphoprotein</keyword>
<keyword id="KW-0627">Porphyrin biosynthesis</keyword>
<keyword id="KW-1185">Reference proteome</keyword>
<keyword id="KW-0949">S-adenosyl-L-methionine</keyword>
<keyword id="KW-0808">Transferase</keyword>
<gene>
    <name evidence="2" type="primary">cysG</name>
    <name type="ordered locus">b3368</name>
    <name type="ordered locus">JW3331</name>
</gene>
<protein>
    <recommendedName>
        <fullName evidence="2 8">Siroheme synthase</fullName>
    </recommendedName>
    <domain>
        <recommendedName>
            <fullName evidence="2">Uroporphyrinogen-III C-methyltransferase</fullName>
            <shortName evidence="2">Urogen III methylase</shortName>
            <ecNumber evidence="2 3 6 7">2.1.1.107</ecNumber>
        </recommendedName>
        <alternativeName>
            <fullName evidence="2">SUMT</fullName>
        </alternativeName>
        <alternativeName>
            <fullName evidence="2">Uroporphyrinogen III methylase</fullName>
            <shortName evidence="2">UROM</shortName>
        </alternativeName>
    </domain>
    <domain>
        <recommendedName>
            <fullName evidence="2">Precorrin-2 dehydrogenase</fullName>
            <ecNumber evidence="2 5 7">1.3.1.76</ecNumber>
        </recommendedName>
    </domain>
    <domain>
        <recommendedName>
            <fullName evidence="2">Sirohydrochlorin ferrochelatase</fullName>
            <ecNumber evidence="2 5 7">4.99.1.4</ecNumber>
        </recommendedName>
    </domain>
</protein>
<organism>
    <name type="scientific">Escherichia coli (strain K12)</name>
    <dbReference type="NCBI Taxonomy" id="83333"/>
    <lineage>
        <taxon>Bacteria</taxon>
        <taxon>Pseudomonadati</taxon>
        <taxon>Pseudomonadota</taxon>
        <taxon>Gammaproteobacteria</taxon>
        <taxon>Enterobacterales</taxon>
        <taxon>Enterobacteriaceae</taxon>
        <taxon>Escherichia</taxon>
    </lineage>
</organism>
<accession>P0AEA8</accession>
<accession>P11098</accession>
<accession>P76685</accession>
<accession>Q2M734</accession>
<comment type="function">
    <text evidence="2 3 4 5 6 7">Multifunctional enzyme that catalyzes the SAM-dependent methylations of uroporphyrinogen III at position C-2 and C-7 to form precorrin-2 via precorrin-1. Then it catalyzes the NAD-dependent ring dehydrogenation of precorrin-2 to yield sirohydrochlorin. Finally, it catalyzes the ferrochelation of sirohydrochlorin to yield siroheme.</text>
</comment>
<comment type="catalytic activity">
    <reaction evidence="2 3 6 7">
        <text>uroporphyrinogen III + 2 S-adenosyl-L-methionine = precorrin-2 + 2 S-adenosyl-L-homocysteine + H(+)</text>
        <dbReference type="Rhea" id="RHEA:32459"/>
        <dbReference type="ChEBI" id="CHEBI:15378"/>
        <dbReference type="ChEBI" id="CHEBI:57308"/>
        <dbReference type="ChEBI" id="CHEBI:57856"/>
        <dbReference type="ChEBI" id="CHEBI:58827"/>
        <dbReference type="ChEBI" id="CHEBI:59789"/>
        <dbReference type="EC" id="2.1.1.107"/>
    </reaction>
</comment>
<comment type="catalytic activity">
    <reaction evidence="2 5 7">
        <text>precorrin-2 + NAD(+) = sirohydrochlorin + NADH + 2 H(+)</text>
        <dbReference type="Rhea" id="RHEA:15613"/>
        <dbReference type="ChEBI" id="CHEBI:15378"/>
        <dbReference type="ChEBI" id="CHEBI:57540"/>
        <dbReference type="ChEBI" id="CHEBI:57945"/>
        <dbReference type="ChEBI" id="CHEBI:58351"/>
        <dbReference type="ChEBI" id="CHEBI:58827"/>
        <dbReference type="EC" id="1.3.1.76"/>
    </reaction>
</comment>
<comment type="catalytic activity">
    <reaction evidence="2 5 7">
        <text>siroheme + 2 H(+) = sirohydrochlorin + Fe(2+)</text>
        <dbReference type="Rhea" id="RHEA:24360"/>
        <dbReference type="ChEBI" id="CHEBI:15378"/>
        <dbReference type="ChEBI" id="CHEBI:29033"/>
        <dbReference type="ChEBI" id="CHEBI:58351"/>
        <dbReference type="ChEBI" id="CHEBI:60052"/>
        <dbReference type="EC" id="4.99.1.4"/>
    </reaction>
</comment>
<comment type="pathway">
    <text evidence="2 10">Cofactor biosynthesis; adenosylcobalamin biosynthesis; precorrin-2 from uroporphyrinogen III: step 1/1.</text>
</comment>
<comment type="pathway">
    <text evidence="2 11">Cofactor biosynthesis; adenosylcobalamin biosynthesis; sirohydrochlorin from precorrin-2: step 1/1.</text>
</comment>
<comment type="pathway">
    <text evidence="2 10">Porphyrin-containing compound metabolism; siroheme biosynthesis; precorrin-2 from uroporphyrinogen III: step 1/1.</text>
</comment>
<comment type="pathway">
    <text evidence="2 11">Porphyrin-containing compound metabolism; siroheme biosynthesis; siroheme from sirohydrochlorin: step 1/1.</text>
</comment>
<comment type="pathway">
    <text evidence="2 11">Porphyrin-containing compound metabolism; siroheme biosynthesis; sirohydrochlorin from precorrin-2: step 1/1.</text>
</comment>
<comment type="subunit">
    <text evidence="3">Monomer.</text>
</comment>
<comment type="similarity">
    <text evidence="2">In the N-terminal section; belongs to the precorrin-2 dehydrogenase / sirohydrochlorin ferrochelatase family.</text>
</comment>
<comment type="similarity">
    <text evidence="2">In the C-terminal section; belongs to the precorrin methyltransferase family.</text>
</comment>
<feature type="chain" id="PRO_0000150378" description="Siroheme synthase">
    <location>
        <begin position="1"/>
        <end position="457"/>
    </location>
</feature>
<feature type="region of interest" description="Precorrin-2 dehydrogenase /sirohydrochlorin ferrochelatase" evidence="1">
    <location>
        <begin position="4"/>
        <end position="204"/>
    </location>
</feature>
<feature type="region of interest" description="Uroporphyrinogen-III C-methyltransferase" evidence="2">
    <location>
        <begin position="216"/>
        <end position="448"/>
    </location>
</feature>
<feature type="active site" description="Proton acceptor" evidence="2">
    <location>
        <position position="248"/>
    </location>
</feature>
<feature type="active site" description="Proton donor" evidence="2">
    <location>
        <position position="270"/>
    </location>
</feature>
<feature type="binding site" evidence="2">
    <location>
        <begin position="22"/>
        <end position="23"/>
    </location>
    <ligand>
        <name>NAD(+)</name>
        <dbReference type="ChEBI" id="CHEBI:57540"/>
    </ligand>
</feature>
<feature type="binding site" evidence="2">
    <location>
        <begin position="43"/>
        <end position="44"/>
    </location>
    <ligand>
        <name>NAD(+)</name>
        <dbReference type="ChEBI" id="CHEBI:57540"/>
    </ligand>
</feature>
<feature type="binding site" evidence="2">
    <location>
        <position position="225"/>
    </location>
    <ligand>
        <name>S-adenosyl-L-methionine</name>
        <dbReference type="ChEBI" id="CHEBI:59789"/>
    </ligand>
</feature>
<feature type="binding site" evidence="2">
    <location>
        <begin position="301"/>
        <end position="303"/>
    </location>
    <ligand>
        <name>S-adenosyl-L-methionine</name>
        <dbReference type="ChEBI" id="CHEBI:59789"/>
    </ligand>
</feature>
<feature type="binding site" evidence="2">
    <location>
        <position position="306"/>
    </location>
    <ligand>
        <name>S-adenosyl-L-methionine</name>
        <dbReference type="ChEBI" id="CHEBI:59789"/>
    </ligand>
</feature>
<feature type="binding site" evidence="2">
    <location>
        <begin position="331"/>
        <end position="332"/>
    </location>
    <ligand>
        <name>S-adenosyl-L-methionine</name>
        <dbReference type="ChEBI" id="CHEBI:59789"/>
    </ligand>
</feature>
<feature type="binding site" evidence="2">
    <location>
        <position position="382"/>
    </location>
    <ligand>
        <name>S-adenosyl-L-methionine</name>
        <dbReference type="ChEBI" id="CHEBI:59789"/>
    </ligand>
</feature>
<feature type="binding site" evidence="2">
    <location>
        <position position="411"/>
    </location>
    <ligand>
        <name>S-adenosyl-L-methionine</name>
        <dbReference type="ChEBI" id="CHEBI:59789"/>
    </ligand>
</feature>
<feature type="modified residue" description="Phosphoserine" evidence="2">
    <location>
        <position position="128"/>
    </location>
</feature>
<feature type="mutagenesis site" description="It has methyltransferase and ferrochelatase activities but a greatly reduced dehydrogenase activity. It is able to bind AdoMet." evidence="7">
    <original>G</original>
    <variation>D</variation>
    <location>
        <position position="21"/>
    </location>
</feature>
<feature type="mutagenesis site" description="It abolishes methyltransferase activity, but has dehydrogenase and ferrochelatase activities. It is unable to bind AdoMet." evidence="7">
    <original>G</original>
    <variation>A</variation>
    <location>
        <position position="224"/>
    </location>
</feature>
<feature type="mutagenesis site" description="It has all activities of CysG." evidence="7">
    <original>D</original>
    <variation>A</variation>
    <location>
        <position position="227"/>
    </location>
</feature>
<feature type="mutagenesis site" description="It abolishes methyltransferase activity, but has dehydrogenase and ferrochelatase activities. It is able to bind AdoMet.">
    <original>D</original>
    <variation>A</variation>
    <location>
        <position position="248"/>
    </location>
</feature>
<feature type="mutagenesis site" description="It has all activities of CysG. It is able to bind AdoMet." evidence="7">
    <original>K</original>
    <variation>I</variation>
    <location>
        <position position="270"/>
    </location>
</feature>
<feature type="mutagenesis site" description="It abolishes methyltransferase activity, but has dehydrogenase and ferrochelatase activities. It is unable to bind AdoMet." evidence="7">
    <original>R</original>
    <variation>L</variation>
    <location>
        <position position="298"/>
    </location>
</feature>
<feature type="mutagenesis site" description="It has all activities of CysG. It is able to bind AdoMet." evidence="7">
    <original>D</original>
    <variation>A</variation>
    <location>
        <position position="303"/>
    </location>
</feature>
<feature type="mutagenesis site" description="It abolishes methyltransferase activity, but has dehydrogenase and ferrochelatase activities. It is able to bind AdoMet." evidence="7">
    <original>R</original>
    <variation>L</variation>
    <location>
        <position position="309"/>
    </location>
</feature>
<feature type="sequence conflict" description="In Ref. 1; CAA32419 and 2; AAA58165." evidence="9" ref="1 2">
    <original>R</original>
    <variation>P</variation>
    <location>
        <position position="26"/>
    </location>
</feature>
<feature type="sequence conflict" description="In Ref. 1; CAA32419 and 2; AAA58165." evidence="9" ref="1 2">
    <original>SE</original>
    <variation>RQ</variation>
    <location>
        <begin position="90"/>
        <end position="91"/>
    </location>
</feature>
<name>CYSG_ECOLI</name>
<evidence type="ECO:0000250" key="1"/>
<evidence type="ECO:0000255" key="2">
    <source>
        <dbReference type="HAMAP-Rule" id="MF_01646"/>
    </source>
</evidence>
<evidence type="ECO:0000269" key="3">
    <source>
    </source>
</evidence>
<evidence type="ECO:0000269" key="4">
    <source>
    </source>
</evidence>
<evidence type="ECO:0000269" key="5">
    <source>
    </source>
</evidence>
<evidence type="ECO:0000269" key="6">
    <source>
    </source>
</evidence>
<evidence type="ECO:0000269" key="7">
    <source>
    </source>
</evidence>
<evidence type="ECO:0000303" key="8">
    <source>
    </source>
</evidence>
<evidence type="ECO:0000305" key="9"/>
<evidence type="ECO:0000305" key="10">
    <source>
    </source>
</evidence>
<evidence type="ECO:0000305" key="11">
    <source>
    </source>
</evidence>
<reference key="1">
    <citation type="journal article" date="1989" name="Nucleic Acids Res.">
        <title>Cloning of binding sequences for the Escherichia coli transcription activators, FNR and CRP: location of bases involved in discrimination between FNR and CRP.</title>
        <authorList>
            <person name="Bell A.I."/>
            <person name="Gaston K.L."/>
            <person name="Cole J.A."/>
            <person name="Busby S.J.W."/>
        </authorList>
    </citation>
    <scope>NUCLEOTIDE SEQUENCE [GENOMIC DNA]</scope>
    <source>
        <strain>K12</strain>
    </source>
</reference>
<reference key="2">
    <citation type="journal article" date="1990" name="Eur. J. Biochem.">
        <title>Nucleotide sequence, organisation and structural analysis of the products of genes in the nirB-cysG region of the Escherichia coli K-12 chromosome.</title>
        <authorList>
            <person name="Peakman T."/>
            <person name="Crouzet J."/>
            <person name="Mayaux J.F."/>
            <person name="Busby S.J.W."/>
            <person name="Mohan S."/>
            <person name="Harborne N."/>
            <person name="Wootton J."/>
            <person name="Nicolson R."/>
            <person name="Cole J.A."/>
        </authorList>
    </citation>
    <scope>NUCLEOTIDE SEQUENCE [GENOMIC DNA]</scope>
    <source>
        <strain>K12</strain>
    </source>
</reference>
<reference key="3">
    <citation type="journal article" date="1997" name="Science">
        <title>The complete genome sequence of Escherichia coli K-12.</title>
        <authorList>
            <person name="Blattner F.R."/>
            <person name="Plunkett G. III"/>
            <person name="Bloch C.A."/>
            <person name="Perna N.T."/>
            <person name="Burland V."/>
            <person name="Riley M."/>
            <person name="Collado-Vides J."/>
            <person name="Glasner J.D."/>
            <person name="Rode C.K."/>
            <person name="Mayhew G.F."/>
            <person name="Gregor J."/>
            <person name="Davis N.W."/>
            <person name="Kirkpatrick H.A."/>
            <person name="Goeden M.A."/>
            <person name="Rose D.J."/>
            <person name="Mau B."/>
            <person name="Shao Y."/>
        </authorList>
    </citation>
    <scope>NUCLEOTIDE SEQUENCE [LARGE SCALE GENOMIC DNA]</scope>
    <source>
        <strain>K12 / MG1655 / ATCC 47076</strain>
    </source>
</reference>
<reference key="4">
    <citation type="journal article" date="2006" name="Mol. Syst. Biol.">
        <title>Highly accurate genome sequences of Escherichia coli K-12 strains MG1655 and W3110.</title>
        <authorList>
            <person name="Hayashi K."/>
            <person name="Morooka N."/>
            <person name="Yamamoto Y."/>
            <person name="Fujita K."/>
            <person name="Isono K."/>
            <person name="Choi S."/>
            <person name="Ohtsubo E."/>
            <person name="Baba T."/>
            <person name="Wanner B.L."/>
            <person name="Mori H."/>
            <person name="Horiuchi T."/>
        </authorList>
    </citation>
    <scope>NUCLEOTIDE SEQUENCE [LARGE SCALE GENOMIC DNA]</scope>
    <source>
        <strain>K12 / W3110 / ATCC 27325 / DSM 5911</strain>
    </source>
</reference>
<reference key="5">
    <citation type="journal article" date="1990" name="FEBS Lett.">
        <title>Enzymatic synthesis of dihydrosirohydrochlorin (precorrin-2) and of a novel pyrrocorphin by uroporphyrinogen III methylase.</title>
        <authorList>
            <person name="Warren M.J."/>
            <person name="Stolowich N.J."/>
            <person name="Santander P.J."/>
            <person name="Roessner C.A."/>
            <person name="Sowa B.A."/>
            <person name="Scott A.I."/>
        </authorList>
    </citation>
    <scope>PROTEIN SEQUENCE OF 1-18</scope>
    <scope>FUNCTION</scope>
</reference>
<reference key="6">
    <citation type="journal article" date="1990" name="Biochem. J.">
        <title>The Escherichia coli cysG gene encodes S-adenosylmethionine-dependent uroporphyrinogen III methylase.</title>
        <authorList>
            <person name="Warren M.J."/>
            <person name="Roessner C.A."/>
            <person name="Santander P.J."/>
            <person name="Scott A.I."/>
        </authorList>
    </citation>
    <scope>FUNCTION AS A METHYLTRANSFERASE</scope>
    <scope>CATALYTIC ACTIVITY</scope>
    <scope>SUBUNIT</scope>
</reference>
<reference key="7">
    <citation type="journal article" date="1993" name="FEBS Lett.">
        <title>The Escherichia coli cysG gene encodes the multifunctional protein, siroheme synthase.</title>
        <authorList>
            <person name="Spencer J.B."/>
            <person name="Stolowich N.J."/>
            <person name="Roessner C.A."/>
            <person name="Scott A.I."/>
        </authorList>
    </citation>
    <scope>FUNCTION</scope>
    <scope>CATALYTIC ACTIVITY</scope>
</reference>
<reference key="8">
    <citation type="journal article" date="1996" name="Biochem. J.">
        <title>Evidence for a covalent intermediate in the S-adenosyl-L-methionine-dependent transmethylation reaction catalysed by sirohaem synthase.</title>
        <authorList>
            <person name="Woodcock S.C."/>
            <person name="Warren M.J."/>
        </authorList>
    </citation>
    <scope>FUNCTION</scope>
    <scope>CATALYTIC ACTIVITY</scope>
</reference>
<reference key="9">
    <citation type="journal article" date="1998" name="Biochem. J.">
        <title>Effect of mutations in the transmethylase and dehydrogenase/chelatase domains of sirohaem synthase (CysG) on sirohaem and cobalamin biosynthesis.</title>
        <authorList>
            <person name="Woodcock S.C."/>
            <person name="Raux E."/>
            <person name="Levillayer F."/>
            <person name="Thermes C."/>
            <person name="Rambach A."/>
            <person name="Warren M.J."/>
        </authorList>
    </citation>
    <scope>FUNCTION</scope>
    <scope>CATALYTIC ACTIVITY</scope>
    <scope>MUTAGENESIS OF GLY-21; GLY-224; ASP-227; LYS-270; ARG-298; ASP-303 AND ARG-309</scope>
</reference>
<proteinExistence type="evidence at protein level"/>